<sequence>AGDKPGDALLDEWLG</sequence>
<organism>
    <name type="scientific">Zea mays</name>
    <name type="common">Maize</name>
    <dbReference type="NCBI Taxonomy" id="4577"/>
    <lineage>
        <taxon>Eukaryota</taxon>
        <taxon>Viridiplantae</taxon>
        <taxon>Streptophyta</taxon>
        <taxon>Embryophyta</taxon>
        <taxon>Tracheophyta</taxon>
        <taxon>Spermatophyta</taxon>
        <taxon>Magnoliopsida</taxon>
        <taxon>Liliopsida</taxon>
        <taxon>Poales</taxon>
        <taxon>Poaceae</taxon>
        <taxon>PACMAD clade</taxon>
        <taxon>Panicoideae</taxon>
        <taxon>Andropogonodae</taxon>
        <taxon>Andropogoneae</taxon>
        <taxon>Tripsacinae</taxon>
        <taxon>Zea</taxon>
    </lineage>
</organism>
<proteinExistence type="evidence at protein level"/>
<keyword id="KW-0903">Direct protein sequencing</keyword>
<keyword id="KW-1185">Reference proteome</keyword>
<name>UC23_MAIZE</name>
<feature type="chain" id="PRO_0000055519" description="Unknown protein from spot 502 of 2D-PAGE of etiolated coleoptile">
    <location>
        <begin position="1" status="less than"/>
        <end position="15" status="greater than"/>
    </location>
</feature>
<feature type="non-terminal residue">
    <location>
        <position position="1"/>
    </location>
</feature>
<feature type="non-terminal residue">
    <location>
        <position position="15"/>
    </location>
</feature>
<accession>P80629</accession>
<dbReference type="PaxDb" id="4577-GRMZM2G162755_P01"/>
<dbReference type="MaizeGDB" id="123955"/>
<dbReference type="InParanoid" id="P80629"/>
<dbReference type="Proteomes" id="UP000007305">
    <property type="component" value="Unplaced"/>
</dbReference>
<reference key="1">
    <citation type="journal article" date="1996" name="Theor. Appl. Genet.">
        <title>The maize two dimensional gel protein database: towards an integrated genome analysis program.</title>
        <authorList>
            <person name="Touzet P."/>
            <person name="Riccardi F."/>
            <person name="Morin C."/>
            <person name="Damerval C."/>
            <person name="Huet J.-C."/>
            <person name="Pernollet J.-C."/>
            <person name="Zivy M."/>
            <person name="de Vienne D."/>
        </authorList>
        <dbReference type="AGRICOLA" id="IND20551642"/>
    </citation>
    <scope>PROTEIN SEQUENCE</scope>
    <source>
        <tissue>Coleoptile</tissue>
    </source>
</reference>
<comment type="miscellaneous">
    <text>On the 2D-gel the determined pI of this unknown protein is: 6.2, its MW is: 45.0 kDa.</text>
</comment>
<protein>
    <recommendedName>
        <fullName>Unknown protein from spot 502 of 2D-PAGE of etiolated coleoptile</fullName>
    </recommendedName>
</protein>